<sequence length="635" mass="67898">MIDSARYPRLARIQTPDDLRTFDESELRAVADELRAYLIESVGKSGGHFAAGLGVIELTVALHYLYQTPVDQLVWDVGHQTYPHKILTGRRDQIHTVKQKDGVAPFPKREESEYDTFGVGHSSTSISAALGMAIARQSEGDDRKIVAVIGDGAMTAGMAFEALMHAGGMDPEPNLLVILNDNNMSISEAVGGLTKMLGRATGSRTLNALREGGKKILGDKKNNPARFVKRWEEHWKGMFVPSTMFEEMGFHYTGPIDGHDMPALLSTLKTLRASKGPKLLHVMTTKGKGYEPAEGDQIGYHAVGPFDPDKGLVAKAGAKKPTYTDVFSDWLCDAAAAEPRLYGITPAMREGSGLVRFSKEYPQRYFDVAIAEQHAVTLAAGMATQGGKPVVAIYSTFLQRAYDQLVHDVAIQDLDVLFAIDRAGVVGPDGATHAGNLDLSFLRCVPNLVVMAPSNEAECRQMLSTGLQHPGPAAVRYPRGTGTGVAAGTDLSTLPIGKGELRLQGSRIALLAFGSTVAAAEQVGRELGLSVVNMRFIKPLDRELVLAVAAQHEGLVTIEDNVVAGGAGSGVGELLNAEGVLRPILHLGLPDSYQHHASREDLLAEAGIDAAGIRAAVLKRWPQLVTGTPPLSAAG</sequence>
<feature type="chain" id="PRO_1000115775" description="1-deoxy-D-xylulose-5-phosphate synthase">
    <location>
        <begin position="1"/>
        <end position="635"/>
    </location>
</feature>
<feature type="binding site" evidence="1">
    <location>
        <position position="79"/>
    </location>
    <ligand>
        <name>thiamine diphosphate</name>
        <dbReference type="ChEBI" id="CHEBI:58937"/>
    </ligand>
</feature>
<feature type="binding site" evidence="1">
    <location>
        <begin position="120"/>
        <end position="122"/>
    </location>
    <ligand>
        <name>thiamine diphosphate</name>
        <dbReference type="ChEBI" id="CHEBI:58937"/>
    </ligand>
</feature>
<feature type="binding site" evidence="1">
    <location>
        <position position="151"/>
    </location>
    <ligand>
        <name>Mg(2+)</name>
        <dbReference type="ChEBI" id="CHEBI:18420"/>
    </ligand>
</feature>
<feature type="binding site" evidence="1">
    <location>
        <begin position="152"/>
        <end position="153"/>
    </location>
    <ligand>
        <name>thiamine diphosphate</name>
        <dbReference type="ChEBI" id="CHEBI:58937"/>
    </ligand>
</feature>
<feature type="binding site" evidence="1">
    <location>
        <position position="182"/>
    </location>
    <ligand>
        <name>Mg(2+)</name>
        <dbReference type="ChEBI" id="CHEBI:18420"/>
    </ligand>
</feature>
<feature type="binding site" evidence="1">
    <location>
        <position position="182"/>
    </location>
    <ligand>
        <name>thiamine diphosphate</name>
        <dbReference type="ChEBI" id="CHEBI:58937"/>
    </ligand>
</feature>
<feature type="binding site" evidence="1">
    <location>
        <position position="290"/>
    </location>
    <ligand>
        <name>thiamine diphosphate</name>
        <dbReference type="ChEBI" id="CHEBI:58937"/>
    </ligand>
</feature>
<feature type="binding site" evidence="1">
    <location>
        <position position="372"/>
    </location>
    <ligand>
        <name>thiamine diphosphate</name>
        <dbReference type="ChEBI" id="CHEBI:58937"/>
    </ligand>
</feature>
<keyword id="KW-0414">Isoprene biosynthesis</keyword>
<keyword id="KW-0460">Magnesium</keyword>
<keyword id="KW-0479">Metal-binding</keyword>
<keyword id="KW-1185">Reference proteome</keyword>
<keyword id="KW-0784">Thiamine biosynthesis</keyword>
<keyword id="KW-0786">Thiamine pyrophosphate</keyword>
<keyword id="KW-0808">Transferase</keyword>
<proteinExistence type="inferred from homology"/>
<reference key="1">
    <citation type="journal article" date="2008" name="Genome Biol.">
        <title>The complete genome, comparative and functional analysis of Stenotrophomonas maltophilia reveals an organism heavily shielded by drug resistance determinants.</title>
        <authorList>
            <person name="Crossman L.C."/>
            <person name="Gould V.C."/>
            <person name="Dow J.M."/>
            <person name="Vernikos G.S."/>
            <person name="Okazaki A."/>
            <person name="Sebaihia M."/>
            <person name="Saunders D."/>
            <person name="Arrowsmith C."/>
            <person name="Carver T."/>
            <person name="Peters N."/>
            <person name="Adlem E."/>
            <person name="Kerhornou A."/>
            <person name="Lord A."/>
            <person name="Murphy L."/>
            <person name="Seeger K."/>
            <person name="Squares R."/>
            <person name="Rutter S."/>
            <person name="Quail M.A."/>
            <person name="Rajandream M.A."/>
            <person name="Harris D."/>
            <person name="Churcher C."/>
            <person name="Bentley S.D."/>
            <person name="Parkhill J."/>
            <person name="Thomson N.R."/>
            <person name="Avison M.B."/>
        </authorList>
    </citation>
    <scope>NUCLEOTIDE SEQUENCE [LARGE SCALE GENOMIC DNA]</scope>
    <source>
        <strain>K279a</strain>
    </source>
</reference>
<name>DXS_STRMK</name>
<accession>B2FN57</accession>
<protein>
    <recommendedName>
        <fullName evidence="1">1-deoxy-D-xylulose-5-phosphate synthase</fullName>
        <ecNumber evidence="1">2.2.1.7</ecNumber>
    </recommendedName>
    <alternativeName>
        <fullName evidence="1">1-deoxyxylulose-5-phosphate synthase</fullName>
        <shortName evidence="1">DXP synthase</shortName>
        <shortName evidence="1">DXPS</shortName>
    </alternativeName>
</protein>
<evidence type="ECO:0000255" key="1">
    <source>
        <dbReference type="HAMAP-Rule" id="MF_00315"/>
    </source>
</evidence>
<organism>
    <name type="scientific">Stenotrophomonas maltophilia (strain K279a)</name>
    <dbReference type="NCBI Taxonomy" id="522373"/>
    <lineage>
        <taxon>Bacteria</taxon>
        <taxon>Pseudomonadati</taxon>
        <taxon>Pseudomonadota</taxon>
        <taxon>Gammaproteobacteria</taxon>
        <taxon>Lysobacterales</taxon>
        <taxon>Lysobacteraceae</taxon>
        <taxon>Stenotrophomonas</taxon>
        <taxon>Stenotrophomonas maltophilia group</taxon>
    </lineage>
</organism>
<dbReference type="EC" id="2.2.1.7" evidence="1"/>
<dbReference type="EMBL" id="AM743169">
    <property type="protein sequence ID" value="CAQ46784.1"/>
    <property type="molecule type" value="Genomic_DNA"/>
</dbReference>
<dbReference type="RefSeq" id="WP_012480865.1">
    <property type="nucleotide sequence ID" value="NC_010943.1"/>
</dbReference>
<dbReference type="SMR" id="B2FN57"/>
<dbReference type="EnsemblBacteria" id="CAQ46784">
    <property type="protein sequence ID" value="CAQ46784"/>
    <property type="gene ID" value="Smlt3355"/>
</dbReference>
<dbReference type="KEGG" id="sml:Smlt3355"/>
<dbReference type="PATRIC" id="fig|522373.3.peg.3144"/>
<dbReference type="eggNOG" id="COG1154">
    <property type="taxonomic scope" value="Bacteria"/>
</dbReference>
<dbReference type="HOGENOM" id="CLU_009227_1_4_6"/>
<dbReference type="UniPathway" id="UPA00064">
    <property type="reaction ID" value="UER00091"/>
</dbReference>
<dbReference type="Proteomes" id="UP000008840">
    <property type="component" value="Chromosome"/>
</dbReference>
<dbReference type="GO" id="GO:0005829">
    <property type="term" value="C:cytosol"/>
    <property type="evidence" value="ECO:0007669"/>
    <property type="project" value="TreeGrafter"/>
</dbReference>
<dbReference type="GO" id="GO:0008661">
    <property type="term" value="F:1-deoxy-D-xylulose-5-phosphate synthase activity"/>
    <property type="evidence" value="ECO:0007669"/>
    <property type="project" value="UniProtKB-UniRule"/>
</dbReference>
<dbReference type="GO" id="GO:0000287">
    <property type="term" value="F:magnesium ion binding"/>
    <property type="evidence" value="ECO:0007669"/>
    <property type="project" value="UniProtKB-UniRule"/>
</dbReference>
<dbReference type="GO" id="GO:0030976">
    <property type="term" value="F:thiamine pyrophosphate binding"/>
    <property type="evidence" value="ECO:0007669"/>
    <property type="project" value="UniProtKB-UniRule"/>
</dbReference>
<dbReference type="GO" id="GO:0052865">
    <property type="term" value="P:1-deoxy-D-xylulose 5-phosphate biosynthetic process"/>
    <property type="evidence" value="ECO:0007669"/>
    <property type="project" value="UniProtKB-UniPathway"/>
</dbReference>
<dbReference type="GO" id="GO:0019288">
    <property type="term" value="P:isopentenyl diphosphate biosynthetic process, methylerythritol 4-phosphate pathway"/>
    <property type="evidence" value="ECO:0007669"/>
    <property type="project" value="TreeGrafter"/>
</dbReference>
<dbReference type="GO" id="GO:0016114">
    <property type="term" value="P:terpenoid biosynthetic process"/>
    <property type="evidence" value="ECO:0007669"/>
    <property type="project" value="UniProtKB-UniRule"/>
</dbReference>
<dbReference type="GO" id="GO:0009228">
    <property type="term" value="P:thiamine biosynthetic process"/>
    <property type="evidence" value="ECO:0007669"/>
    <property type="project" value="UniProtKB-UniRule"/>
</dbReference>
<dbReference type="CDD" id="cd02007">
    <property type="entry name" value="TPP_DXS"/>
    <property type="match status" value="1"/>
</dbReference>
<dbReference type="CDD" id="cd07033">
    <property type="entry name" value="TPP_PYR_DXS_TK_like"/>
    <property type="match status" value="1"/>
</dbReference>
<dbReference type="FunFam" id="3.40.50.920:FF:000002">
    <property type="entry name" value="1-deoxy-D-xylulose-5-phosphate synthase"/>
    <property type="match status" value="1"/>
</dbReference>
<dbReference type="FunFam" id="3.40.50.970:FF:000005">
    <property type="entry name" value="1-deoxy-D-xylulose-5-phosphate synthase"/>
    <property type="match status" value="1"/>
</dbReference>
<dbReference type="Gene3D" id="3.40.50.920">
    <property type="match status" value="1"/>
</dbReference>
<dbReference type="Gene3D" id="3.40.50.970">
    <property type="match status" value="2"/>
</dbReference>
<dbReference type="HAMAP" id="MF_00315">
    <property type="entry name" value="DXP_synth"/>
    <property type="match status" value="1"/>
</dbReference>
<dbReference type="InterPro" id="IPR005477">
    <property type="entry name" value="Dxylulose-5-P_synthase"/>
</dbReference>
<dbReference type="InterPro" id="IPR029061">
    <property type="entry name" value="THDP-binding"/>
</dbReference>
<dbReference type="InterPro" id="IPR009014">
    <property type="entry name" value="Transketo_C/PFOR_II"/>
</dbReference>
<dbReference type="InterPro" id="IPR005475">
    <property type="entry name" value="Transketolase-like_Pyr-bd"/>
</dbReference>
<dbReference type="InterPro" id="IPR020826">
    <property type="entry name" value="Transketolase_BS"/>
</dbReference>
<dbReference type="InterPro" id="IPR033248">
    <property type="entry name" value="Transketolase_C"/>
</dbReference>
<dbReference type="InterPro" id="IPR049557">
    <property type="entry name" value="Transketolase_CS"/>
</dbReference>
<dbReference type="NCBIfam" id="TIGR00204">
    <property type="entry name" value="dxs"/>
    <property type="match status" value="1"/>
</dbReference>
<dbReference type="NCBIfam" id="NF003933">
    <property type="entry name" value="PRK05444.2-2"/>
    <property type="match status" value="1"/>
</dbReference>
<dbReference type="PANTHER" id="PTHR43322">
    <property type="entry name" value="1-D-DEOXYXYLULOSE 5-PHOSPHATE SYNTHASE-RELATED"/>
    <property type="match status" value="1"/>
</dbReference>
<dbReference type="PANTHER" id="PTHR43322:SF5">
    <property type="entry name" value="1-DEOXY-D-XYLULOSE-5-PHOSPHATE SYNTHASE, CHLOROPLASTIC"/>
    <property type="match status" value="1"/>
</dbReference>
<dbReference type="Pfam" id="PF13292">
    <property type="entry name" value="DXP_synthase_N"/>
    <property type="match status" value="1"/>
</dbReference>
<dbReference type="Pfam" id="PF02779">
    <property type="entry name" value="Transket_pyr"/>
    <property type="match status" value="1"/>
</dbReference>
<dbReference type="Pfam" id="PF02780">
    <property type="entry name" value="Transketolase_C"/>
    <property type="match status" value="1"/>
</dbReference>
<dbReference type="SMART" id="SM00861">
    <property type="entry name" value="Transket_pyr"/>
    <property type="match status" value="1"/>
</dbReference>
<dbReference type="SUPFAM" id="SSF52518">
    <property type="entry name" value="Thiamin diphosphate-binding fold (THDP-binding)"/>
    <property type="match status" value="2"/>
</dbReference>
<dbReference type="SUPFAM" id="SSF52922">
    <property type="entry name" value="TK C-terminal domain-like"/>
    <property type="match status" value="1"/>
</dbReference>
<dbReference type="PROSITE" id="PS00801">
    <property type="entry name" value="TRANSKETOLASE_1"/>
    <property type="match status" value="1"/>
</dbReference>
<dbReference type="PROSITE" id="PS00802">
    <property type="entry name" value="TRANSKETOLASE_2"/>
    <property type="match status" value="1"/>
</dbReference>
<comment type="function">
    <text evidence="1">Catalyzes the acyloin condensation reaction between C atoms 2 and 3 of pyruvate and glyceraldehyde 3-phosphate to yield 1-deoxy-D-xylulose-5-phosphate (DXP).</text>
</comment>
<comment type="catalytic activity">
    <reaction evidence="1">
        <text>D-glyceraldehyde 3-phosphate + pyruvate + H(+) = 1-deoxy-D-xylulose 5-phosphate + CO2</text>
        <dbReference type="Rhea" id="RHEA:12605"/>
        <dbReference type="ChEBI" id="CHEBI:15361"/>
        <dbReference type="ChEBI" id="CHEBI:15378"/>
        <dbReference type="ChEBI" id="CHEBI:16526"/>
        <dbReference type="ChEBI" id="CHEBI:57792"/>
        <dbReference type="ChEBI" id="CHEBI:59776"/>
        <dbReference type="EC" id="2.2.1.7"/>
    </reaction>
</comment>
<comment type="cofactor">
    <cofactor evidence="1">
        <name>Mg(2+)</name>
        <dbReference type="ChEBI" id="CHEBI:18420"/>
    </cofactor>
    <text evidence="1">Binds 1 Mg(2+) ion per subunit.</text>
</comment>
<comment type="cofactor">
    <cofactor evidence="1">
        <name>thiamine diphosphate</name>
        <dbReference type="ChEBI" id="CHEBI:58937"/>
    </cofactor>
    <text evidence="1">Binds 1 thiamine pyrophosphate per subunit.</text>
</comment>
<comment type="pathway">
    <text evidence="1">Metabolic intermediate biosynthesis; 1-deoxy-D-xylulose 5-phosphate biosynthesis; 1-deoxy-D-xylulose 5-phosphate from D-glyceraldehyde 3-phosphate and pyruvate: step 1/1.</text>
</comment>
<comment type="subunit">
    <text evidence="1">Homodimer.</text>
</comment>
<comment type="similarity">
    <text evidence="1">Belongs to the transketolase family. DXPS subfamily.</text>
</comment>
<gene>
    <name evidence="1" type="primary">dxs</name>
    <name type="ordered locus">Smlt3355</name>
</gene>